<accession>O18690</accession>
<keyword id="KW-0472">Membrane</keyword>
<keyword id="KW-1185">Reference proteome</keyword>
<keyword id="KW-0812">Transmembrane</keyword>
<keyword id="KW-1133">Transmembrane helix</keyword>
<name>SRA21_CAEEL</name>
<dbReference type="EMBL" id="Z93380">
    <property type="protein sequence ID" value="CAB07597.1"/>
    <property type="molecule type" value="Genomic_DNA"/>
</dbReference>
<dbReference type="PIR" id="T21473">
    <property type="entry name" value="T21473"/>
</dbReference>
<dbReference type="RefSeq" id="NP_493217.1">
    <property type="nucleotide sequence ID" value="NM_060816.3"/>
</dbReference>
<dbReference type="FunCoup" id="O18690">
    <property type="interactions" value="13"/>
</dbReference>
<dbReference type="PaxDb" id="6239-F28C12.5"/>
<dbReference type="EnsemblMetazoa" id="F28C12.5.1">
    <property type="protein sequence ID" value="F28C12.5.1"/>
    <property type="gene ID" value="WBGene00005047"/>
</dbReference>
<dbReference type="GeneID" id="185057"/>
<dbReference type="KEGG" id="cel:CELE_F28C12.5"/>
<dbReference type="UCSC" id="F28C12.5">
    <property type="organism name" value="c. elegans"/>
</dbReference>
<dbReference type="AGR" id="WB:WBGene00005047"/>
<dbReference type="CTD" id="185057"/>
<dbReference type="WormBase" id="F28C12.5">
    <property type="protein sequence ID" value="CE09752"/>
    <property type="gene ID" value="WBGene00005047"/>
    <property type="gene designation" value="sra-21"/>
</dbReference>
<dbReference type="eggNOG" id="ENOG502THAY">
    <property type="taxonomic scope" value="Eukaryota"/>
</dbReference>
<dbReference type="GeneTree" id="ENSGT00970000195862"/>
<dbReference type="HOGENOM" id="CLU_070413_0_0_1"/>
<dbReference type="InParanoid" id="O18690"/>
<dbReference type="PhylomeDB" id="O18690"/>
<dbReference type="PRO" id="PR:O18690"/>
<dbReference type="Proteomes" id="UP000001940">
    <property type="component" value="Chromosome I"/>
</dbReference>
<dbReference type="GO" id="GO:0016020">
    <property type="term" value="C:membrane"/>
    <property type="evidence" value="ECO:0007669"/>
    <property type="project" value="UniProtKB-SubCell"/>
</dbReference>
<dbReference type="GO" id="GO:0004930">
    <property type="term" value="F:G protein-coupled receptor activity"/>
    <property type="evidence" value="ECO:0007669"/>
    <property type="project" value="InterPro"/>
</dbReference>
<dbReference type="GO" id="GO:0007606">
    <property type="term" value="P:sensory perception of chemical stimulus"/>
    <property type="evidence" value="ECO:0007669"/>
    <property type="project" value="InterPro"/>
</dbReference>
<dbReference type="InterPro" id="IPR000344">
    <property type="entry name" value="7TM_GPCR_serpentine_rcpt_Sra"/>
</dbReference>
<dbReference type="PANTHER" id="PTHR31582:SF2">
    <property type="entry name" value="G-PROTEIN COUPLED RECEPTORS FAMILY 1 PROFILE DOMAIN-CONTAINING PROTEIN-RELATED"/>
    <property type="match status" value="1"/>
</dbReference>
<dbReference type="PANTHER" id="PTHR31582">
    <property type="entry name" value="SERPENTINE RECEPTOR, CLASS A (ALPHA)-RELATED-RELATED"/>
    <property type="match status" value="1"/>
</dbReference>
<dbReference type="Pfam" id="PF02117">
    <property type="entry name" value="7TM_GPCR_Sra"/>
    <property type="match status" value="1"/>
</dbReference>
<dbReference type="PRINTS" id="PR00697">
    <property type="entry name" value="TMPROTEINSRA"/>
</dbReference>
<dbReference type="SUPFAM" id="SSF81321">
    <property type="entry name" value="Family A G protein-coupled receptor-like"/>
    <property type="match status" value="1"/>
</dbReference>
<organism>
    <name type="scientific">Caenorhabditis elegans</name>
    <dbReference type="NCBI Taxonomy" id="6239"/>
    <lineage>
        <taxon>Eukaryota</taxon>
        <taxon>Metazoa</taxon>
        <taxon>Ecdysozoa</taxon>
        <taxon>Nematoda</taxon>
        <taxon>Chromadorea</taxon>
        <taxon>Rhabditida</taxon>
        <taxon>Rhabditina</taxon>
        <taxon>Rhabditomorpha</taxon>
        <taxon>Rhabditoidea</taxon>
        <taxon>Rhabditidae</taxon>
        <taxon>Peloderinae</taxon>
        <taxon>Caenorhabditis</taxon>
    </lineage>
</organism>
<sequence>MSQLTAEELDSQKCASEGLTSVLTSITMKFNFLFITTVILLSYCFTWLAIRALWKNNIFSNSTRLILIACLLNSVVHQTTMLESRMRQTYRSFVFASEPCNLLYRSSDCVFELHSYYLTGYFSTYSVCSLAFDRLVSHYKSKFYHTHQYFIAVSLLVLQLLLTLVSFYIAYYGVHLAGYVPVCIHYPRLAVHYSTVNTVRTVVMVCCLVVTGFIYYLSVKSEKQIQKSSYSPGKRYTAYENVTTSQSVCILIVLKLFCNMLSSIGINLLLLMGEVVSEGTFVLVALFLPGVTYANLCLPLVIYFKTKLIIRNRKFRIAVMTSMYGDAGEHIDRLKKSWE</sequence>
<gene>
    <name type="primary">sra-21</name>
    <name type="ORF">F28C12.5</name>
</gene>
<proteinExistence type="inferred from homology"/>
<comment type="subcellular location">
    <subcellularLocation>
        <location evidence="2">Membrane</location>
        <topology evidence="2">Multi-pass membrane protein</topology>
    </subcellularLocation>
</comment>
<comment type="similarity">
    <text evidence="2">Belongs to the nematode receptor-like protein sra family.</text>
</comment>
<protein>
    <recommendedName>
        <fullName>Serpentine receptor class alpha-21</fullName>
        <shortName>Protein sra-21</shortName>
    </recommendedName>
</protein>
<feature type="chain" id="PRO_0000104483" description="Serpentine receptor class alpha-21">
    <location>
        <begin position="1"/>
        <end position="339"/>
    </location>
</feature>
<feature type="transmembrane region" description="Helical" evidence="1">
    <location>
        <begin position="30"/>
        <end position="50"/>
    </location>
</feature>
<feature type="transmembrane region" description="Helical" evidence="1">
    <location>
        <begin position="150"/>
        <end position="170"/>
    </location>
</feature>
<feature type="transmembrane region" description="Helical" evidence="1">
    <location>
        <begin position="199"/>
        <end position="219"/>
    </location>
</feature>
<feature type="transmembrane region" description="Helical" evidence="1">
    <location>
        <begin position="250"/>
        <end position="270"/>
    </location>
</feature>
<feature type="transmembrane region" description="Helical" evidence="1">
    <location>
        <begin position="282"/>
        <end position="302"/>
    </location>
</feature>
<reference key="1">
    <citation type="journal article" date="1998" name="Science">
        <title>Genome sequence of the nematode C. elegans: a platform for investigating biology.</title>
        <authorList>
            <consortium name="The C. elegans sequencing consortium"/>
        </authorList>
    </citation>
    <scope>NUCLEOTIDE SEQUENCE [LARGE SCALE GENOMIC DNA]</scope>
    <source>
        <strain>Bristol N2</strain>
    </source>
</reference>
<evidence type="ECO:0000255" key="1"/>
<evidence type="ECO:0000305" key="2"/>